<sequence length="35" mass="4027">MEALVYTFLLIGTLGIIFFAIFFREPPRLPVKGKK</sequence>
<accession>P59903</accession>
<proteinExistence type="inferred from homology"/>
<protein>
    <recommendedName>
        <fullName evidence="1">Photosystem II reaction center protein T</fullName>
        <shortName evidence="1">PSII-T</shortName>
    </recommendedName>
</protein>
<comment type="function">
    <text evidence="1">Found at the monomer-monomer interface of the photosystem II (PS II) dimer, plays a role in assembly and dimerization of PSII. PSII is a light-driven water plastoquinone oxidoreductase, using light energy to abstract electrons from H(2)O, generating a proton gradient subsequently used for ATP formation.</text>
</comment>
<comment type="subunit">
    <text evidence="1">PSII is composed of 1 copy each of membrane proteins PsbA, PsbB, PsbC, PsbD, PsbE, PsbF, PsbH, PsbI, PsbJ, PsbK, PsbL, PsbM, PsbT, PsbY, PsbZ, Psb30/Ycf12, at least 3 peripheral proteins of the oxygen-evolving complex and a large number of cofactors. It forms dimeric complexes.</text>
</comment>
<comment type="subcellular location">
    <subcellularLocation>
        <location evidence="1">Plastid</location>
        <location evidence="1">Chloroplast thylakoid membrane</location>
        <topology evidence="1">Single-pass membrane protein</topology>
    </subcellularLocation>
</comment>
<comment type="similarity">
    <text evidence="1">Belongs to the PsbT family.</text>
</comment>
<dbReference type="EMBL" id="AF482495">
    <property type="protein sequence ID" value="AAQ05897.1"/>
    <property type="molecule type" value="Genomic_DNA"/>
</dbReference>
<dbReference type="SMR" id="P59903"/>
<dbReference type="GO" id="GO:0009535">
    <property type="term" value="C:chloroplast thylakoid membrane"/>
    <property type="evidence" value="ECO:0007669"/>
    <property type="project" value="UniProtKB-SubCell"/>
</dbReference>
<dbReference type="GO" id="GO:0009539">
    <property type="term" value="C:photosystem II reaction center"/>
    <property type="evidence" value="ECO:0007669"/>
    <property type="project" value="InterPro"/>
</dbReference>
<dbReference type="GO" id="GO:0015979">
    <property type="term" value="P:photosynthesis"/>
    <property type="evidence" value="ECO:0007669"/>
    <property type="project" value="UniProtKB-UniRule"/>
</dbReference>
<dbReference type="HAMAP" id="MF_00808">
    <property type="entry name" value="PSII_PsbT"/>
    <property type="match status" value="1"/>
</dbReference>
<dbReference type="InterPro" id="IPR001743">
    <property type="entry name" value="PSII_PsbT"/>
</dbReference>
<dbReference type="InterPro" id="IPR037268">
    <property type="entry name" value="PSII_PsbT_sf"/>
</dbReference>
<dbReference type="PANTHER" id="PTHR36411">
    <property type="match status" value="1"/>
</dbReference>
<dbReference type="PANTHER" id="PTHR36411:SF2">
    <property type="entry name" value="PHOTOSYSTEM II REACTION CENTER PROTEIN T"/>
    <property type="match status" value="1"/>
</dbReference>
<dbReference type="Pfam" id="PF01405">
    <property type="entry name" value="PsbT"/>
    <property type="match status" value="1"/>
</dbReference>
<dbReference type="SUPFAM" id="SSF161029">
    <property type="entry name" value="Photosystem II reaction center protein T, PsbT"/>
    <property type="match status" value="1"/>
</dbReference>
<name>PSBT_COLOB</name>
<reference key="1">
    <citation type="submission" date="2002-02" db="EMBL/GenBank/DDBJ databases">
        <title>psbB gene cluster of Charophyceae.</title>
        <authorList>
            <person name="Lee J."/>
            <person name="Manhart J.R."/>
        </authorList>
    </citation>
    <scope>NUCLEOTIDE SEQUENCE [GENOMIC DNA]</scope>
</reference>
<organism>
    <name type="scientific">Coleochaete orbicularis</name>
    <name type="common">Charophycean green alga</name>
    <dbReference type="NCBI Taxonomy" id="3124"/>
    <lineage>
        <taxon>Eukaryota</taxon>
        <taxon>Viridiplantae</taxon>
        <taxon>Streptophyta</taxon>
        <taxon>Coleochaetophyceae</taxon>
        <taxon>Coleochaetales</taxon>
        <taxon>Coleochaetaceae</taxon>
        <taxon>Coleochaete</taxon>
    </lineage>
</organism>
<evidence type="ECO:0000255" key="1">
    <source>
        <dbReference type="HAMAP-Rule" id="MF_00808"/>
    </source>
</evidence>
<geneLocation type="chloroplast"/>
<keyword id="KW-0150">Chloroplast</keyword>
<keyword id="KW-0472">Membrane</keyword>
<keyword id="KW-0602">Photosynthesis</keyword>
<keyword id="KW-0604">Photosystem II</keyword>
<keyword id="KW-0934">Plastid</keyword>
<keyword id="KW-0793">Thylakoid</keyword>
<keyword id="KW-0812">Transmembrane</keyword>
<keyword id="KW-1133">Transmembrane helix</keyword>
<gene>
    <name evidence="1" type="primary">psbT</name>
</gene>
<feature type="chain" id="PRO_0000217919" description="Photosystem II reaction center protein T">
    <location>
        <begin position="1"/>
        <end position="35"/>
    </location>
</feature>
<feature type="transmembrane region" description="Helical" evidence="1">
    <location>
        <begin position="3"/>
        <end position="23"/>
    </location>
</feature>